<dbReference type="EMBL" id="BA000001">
    <property type="protein sequence ID" value="BAA30629.1"/>
    <property type="molecule type" value="Genomic_DNA"/>
</dbReference>
<dbReference type="PIR" id="E71028">
    <property type="entry name" value="E71028"/>
</dbReference>
<dbReference type="RefSeq" id="WP_010885596.1">
    <property type="nucleotide sequence ID" value="NC_000961.1"/>
</dbReference>
<dbReference type="PDB" id="1RI7">
    <property type="method" value="X-ray"/>
    <property type="resolution" value="2.70 A"/>
    <property type="chains" value="A=1-151"/>
</dbReference>
<dbReference type="PDB" id="2CYY">
    <property type="method" value="X-ray"/>
    <property type="resolution" value="1.80 A"/>
    <property type="chains" value="A=1-151"/>
</dbReference>
<dbReference type="PDB" id="2E1C">
    <property type="method" value="X-ray"/>
    <property type="resolution" value="2.10 A"/>
    <property type="chains" value="A=1-151"/>
</dbReference>
<dbReference type="PDB" id="2ZNY">
    <property type="method" value="X-ray"/>
    <property type="resolution" value="2.59 A"/>
    <property type="chains" value="A/B/C/D/E/F/G/H=1-151"/>
</dbReference>
<dbReference type="PDB" id="2ZNZ">
    <property type="method" value="X-ray"/>
    <property type="resolution" value="2.39 A"/>
    <property type="chains" value="A/B/C/D/E/F/G/H=1-151"/>
</dbReference>
<dbReference type="PDBsum" id="1RI7"/>
<dbReference type="PDBsum" id="2CYY"/>
<dbReference type="PDBsum" id="2E1C"/>
<dbReference type="PDBsum" id="2ZNY"/>
<dbReference type="PDBsum" id="2ZNZ"/>
<dbReference type="SMR" id="O59188"/>
<dbReference type="IntAct" id="O59188">
    <property type="interactions" value="1"/>
</dbReference>
<dbReference type="STRING" id="70601.gene:9378503"/>
<dbReference type="EnsemblBacteria" id="BAA30629">
    <property type="protein sequence ID" value="BAA30629"/>
    <property type="gene ID" value="BAA30629"/>
</dbReference>
<dbReference type="GeneID" id="1443836"/>
<dbReference type="KEGG" id="pho:PH1519"/>
<dbReference type="eggNOG" id="arCOG01580">
    <property type="taxonomic scope" value="Archaea"/>
</dbReference>
<dbReference type="OrthoDB" id="6995at2157"/>
<dbReference type="EvolutionaryTrace" id="O59188"/>
<dbReference type="Proteomes" id="UP000000752">
    <property type="component" value="Chromosome"/>
</dbReference>
<dbReference type="GO" id="GO:0005829">
    <property type="term" value="C:cytosol"/>
    <property type="evidence" value="ECO:0007669"/>
    <property type="project" value="TreeGrafter"/>
</dbReference>
<dbReference type="GO" id="GO:0042802">
    <property type="term" value="F:identical protein binding"/>
    <property type="evidence" value="ECO:0000353"/>
    <property type="project" value="IntAct"/>
</dbReference>
<dbReference type="GO" id="GO:0043565">
    <property type="term" value="F:sequence-specific DNA binding"/>
    <property type="evidence" value="ECO:0007669"/>
    <property type="project" value="InterPro"/>
</dbReference>
<dbReference type="GO" id="GO:0043200">
    <property type="term" value="P:response to amino acid"/>
    <property type="evidence" value="ECO:0007669"/>
    <property type="project" value="TreeGrafter"/>
</dbReference>
<dbReference type="CDD" id="cd00090">
    <property type="entry name" value="HTH_ARSR"/>
    <property type="match status" value="1"/>
</dbReference>
<dbReference type="FunFam" id="3.30.70.920:FF:000051">
    <property type="entry name" value="Uncharacterized HTH-type transcriptional regulator PH1519"/>
    <property type="match status" value="1"/>
</dbReference>
<dbReference type="Gene3D" id="3.30.70.920">
    <property type="match status" value="1"/>
</dbReference>
<dbReference type="Gene3D" id="1.10.10.10">
    <property type="entry name" value="Winged helix-like DNA-binding domain superfamily/Winged helix DNA-binding domain"/>
    <property type="match status" value="1"/>
</dbReference>
<dbReference type="InterPro" id="IPR011991">
    <property type="entry name" value="ArsR-like_HTH"/>
</dbReference>
<dbReference type="InterPro" id="IPR000485">
    <property type="entry name" value="AsnC-type_HTH_dom"/>
</dbReference>
<dbReference type="InterPro" id="IPR011008">
    <property type="entry name" value="Dimeric_a/b-barrel"/>
</dbReference>
<dbReference type="InterPro" id="IPR019888">
    <property type="entry name" value="Tscrpt_reg_AsnC-like"/>
</dbReference>
<dbReference type="InterPro" id="IPR019887">
    <property type="entry name" value="Tscrpt_reg_AsnC/Lrp_C"/>
</dbReference>
<dbReference type="InterPro" id="IPR036388">
    <property type="entry name" value="WH-like_DNA-bd_sf"/>
</dbReference>
<dbReference type="InterPro" id="IPR036390">
    <property type="entry name" value="WH_DNA-bd_sf"/>
</dbReference>
<dbReference type="PANTHER" id="PTHR30154">
    <property type="entry name" value="LEUCINE-RESPONSIVE REGULATORY PROTEIN"/>
    <property type="match status" value="1"/>
</dbReference>
<dbReference type="PANTHER" id="PTHR30154:SF34">
    <property type="entry name" value="TRANSCRIPTIONAL REGULATOR AZLB"/>
    <property type="match status" value="1"/>
</dbReference>
<dbReference type="Pfam" id="PF01037">
    <property type="entry name" value="AsnC_trans_reg"/>
    <property type="match status" value="1"/>
</dbReference>
<dbReference type="Pfam" id="PF13404">
    <property type="entry name" value="HTH_AsnC-type"/>
    <property type="match status" value="1"/>
</dbReference>
<dbReference type="PRINTS" id="PR00033">
    <property type="entry name" value="HTHASNC"/>
</dbReference>
<dbReference type="SMART" id="SM00344">
    <property type="entry name" value="HTH_ASNC"/>
    <property type="match status" value="1"/>
</dbReference>
<dbReference type="SUPFAM" id="SSF54909">
    <property type="entry name" value="Dimeric alpha+beta barrel"/>
    <property type="match status" value="1"/>
</dbReference>
<dbReference type="SUPFAM" id="SSF46785">
    <property type="entry name" value="Winged helix' DNA-binding domain"/>
    <property type="match status" value="1"/>
</dbReference>
<dbReference type="PROSITE" id="PS50956">
    <property type="entry name" value="HTH_ASNC_2"/>
    <property type="match status" value="1"/>
</dbReference>
<sequence length="151" mass="16954">MRVPLDEIDKKIIKILQNDGKAPLREISKITGLAESTIHERIRKLRESGVIKKFTAIIDPEALGYSMLAFILVKVKAGKYSEVASNLAKYPEIVEVYETTGDYDMVVKIRTKNSEELNNFLDLIGSIPGVEGTHTMIVLKTHKETTELPIK</sequence>
<gene>
    <name evidence="5" type="primary">fl11</name>
    <name type="ordered locus">PH1519</name>
</gene>
<protein>
    <recommendedName>
        <fullName evidence="6">HTH-type transcriptional regulator FL11</fullName>
    </recommendedName>
    <alternativeName>
        <fullName evidence="6">Feast/famine regulatory protein FL11</fullName>
        <shortName evidence="6">FFRP FL11</shortName>
    </alternativeName>
</protein>
<organism>
    <name type="scientific">Pyrococcus horikoshii (strain ATCC 700860 / DSM 12428 / JCM 9974 / NBRC 100139 / OT-3)</name>
    <dbReference type="NCBI Taxonomy" id="70601"/>
    <lineage>
        <taxon>Archaea</taxon>
        <taxon>Methanobacteriati</taxon>
        <taxon>Methanobacteriota</taxon>
        <taxon>Thermococci</taxon>
        <taxon>Thermococcales</taxon>
        <taxon>Thermococcaceae</taxon>
        <taxon>Pyrococcus</taxon>
    </lineage>
</organism>
<keyword id="KW-0002">3D-structure</keyword>
<keyword id="KW-0238">DNA-binding</keyword>
<keyword id="KW-0678">Repressor</keyword>
<keyword id="KW-0346">Stress response</keyword>
<keyword id="KW-0804">Transcription</keyword>
<keyword id="KW-0805">Transcription regulation</keyword>
<name>REG6_PYRHO</name>
<evidence type="ECO:0000255" key="1">
    <source>
        <dbReference type="PROSITE-ProRule" id="PRU00319"/>
    </source>
</evidence>
<evidence type="ECO:0000269" key="2">
    <source>
    </source>
</evidence>
<evidence type="ECO:0000269" key="3">
    <source>
    </source>
</evidence>
<evidence type="ECO:0000269" key="4">
    <source>
    </source>
</evidence>
<evidence type="ECO:0000303" key="5">
    <source>
    </source>
</evidence>
<evidence type="ECO:0000305" key="6"/>
<evidence type="ECO:0007744" key="7">
    <source>
        <dbReference type="PDB" id="1RI7"/>
    </source>
</evidence>
<evidence type="ECO:0007744" key="8">
    <source>
        <dbReference type="PDB" id="2CYY"/>
    </source>
</evidence>
<evidence type="ECO:0007744" key="9">
    <source>
        <dbReference type="PDB" id="2E1C"/>
    </source>
</evidence>
<evidence type="ECO:0007744" key="10">
    <source>
        <dbReference type="PDB" id="2ZNY"/>
    </source>
</evidence>
<evidence type="ECO:0007744" key="11">
    <source>
        <dbReference type="PDB" id="2ZNZ"/>
    </source>
</evidence>
<evidence type="ECO:0007829" key="12">
    <source>
        <dbReference type="PDB" id="2CYY"/>
    </source>
</evidence>
<evidence type="ECO:0007829" key="13">
    <source>
        <dbReference type="PDB" id="2ZNY"/>
    </source>
</evidence>
<feature type="chain" id="PRO_0000111769" description="HTH-type transcriptional regulator FL11">
    <location>
        <begin position="1"/>
        <end position="151"/>
    </location>
</feature>
<feature type="domain" description="HTH asnC-type" evidence="1">
    <location>
        <begin position="5"/>
        <end position="66"/>
    </location>
</feature>
<feature type="DNA-binding region" description="H-T-H motif" evidence="1">
    <location>
        <begin position="24"/>
        <end position="43"/>
    </location>
</feature>
<feature type="binding site" evidence="4 10">
    <location>
        <begin position="98"/>
        <end position="104"/>
    </location>
    <ligand>
        <name>L-arginine</name>
        <dbReference type="ChEBI" id="CHEBI:32682"/>
    </ligand>
</feature>
<feature type="binding site" evidence="4 11">
    <location>
        <position position="118"/>
    </location>
    <ligand>
        <name>L-lysine</name>
        <dbReference type="ChEBI" id="CHEBI:32551"/>
    </ligand>
</feature>
<feature type="binding site" evidence="4 10">
    <location>
        <position position="122"/>
    </location>
    <ligand>
        <name>L-arginine</name>
        <dbReference type="ChEBI" id="CHEBI:32682"/>
    </ligand>
</feature>
<feature type="binding site" evidence="4 11">
    <location>
        <position position="122"/>
    </location>
    <ligand>
        <name>L-lysine</name>
        <dbReference type="ChEBI" id="CHEBI:32551"/>
    </ligand>
</feature>
<feature type="binding site" evidence="4 10">
    <location>
        <begin position="133"/>
        <end position="135"/>
    </location>
    <ligand>
        <name>L-arginine</name>
        <dbReference type="ChEBI" id="CHEBI:32682"/>
    </ligand>
</feature>
<feature type="binding site" evidence="4 11">
    <location>
        <begin position="133"/>
        <end position="135"/>
    </location>
    <ligand>
        <name>L-lysine</name>
        <dbReference type="ChEBI" id="CHEBI:32551"/>
    </ligand>
</feature>
<feature type="helix" evidence="12">
    <location>
        <begin position="7"/>
        <end position="18"/>
    </location>
</feature>
<feature type="helix" evidence="12">
    <location>
        <begin position="24"/>
        <end position="31"/>
    </location>
</feature>
<feature type="helix" evidence="12">
    <location>
        <begin position="35"/>
        <end position="48"/>
    </location>
</feature>
<feature type="strand" evidence="12">
    <location>
        <begin position="49"/>
        <end position="51"/>
    </location>
</feature>
<feature type="strand" evidence="13">
    <location>
        <begin position="53"/>
        <end position="58"/>
    </location>
</feature>
<feature type="helix" evidence="12">
    <location>
        <begin position="60"/>
        <end position="63"/>
    </location>
</feature>
<feature type="strand" evidence="12">
    <location>
        <begin position="67"/>
        <end position="75"/>
    </location>
</feature>
<feature type="helix" evidence="12">
    <location>
        <begin position="80"/>
        <end position="88"/>
    </location>
</feature>
<feature type="strand" evidence="12">
    <location>
        <begin position="93"/>
        <end position="98"/>
    </location>
</feature>
<feature type="strand" evidence="12">
    <location>
        <begin position="100"/>
        <end position="113"/>
    </location>
</feature>
<feature type="helix" evidence="12">
    <location>
        <begin position="114"/>
        <end position="125"/>
    </location>
</feature>
<feature type="strand" evidence="12">
    <location>
        <begin position="130"/>
        <end position="137"/>
    </location>
</feature>
<proteinExistence type="evidence at protein level"/>
<comment type="function">
    <text evidence="2 3">DNA-binding protein involved in the repression of transcription of a large number of genes, thereby arresting growth, in response to environmental changes (PubMed:14976242, PubMed:18073105). Binding sites are identified in promoters of approximately 200 transcription units, including genes involved in ATP synthesis, transmembrane transport, translation and DNA synthesis (PubMed:18073105).</text>
</comment>
<comment type="activity regulation">
    <text evidence="3 4">In the famine mode, FL11 forms dimers and acts as a repressor, leading to growth arrest (PubMed:18073105). In the feast mode, in the presence of high concentrations of lysine or arginine, four dimers assemble into an octamer and cover the fl11 and lysine biosynthesis promoters (PubMed:18073105, PubMed:19004003). This leads to the inhibition of fl11 expression and lysine biosynthesis, decrease of the FL11 concentration in the cell, derepression of the target genes and activation of the metabolism (PubMed:18073105).</text>
</comment>
<comment type="subunit">
    <text evidence="2 3 4">Homodimer (PubMed:14976242, PubMed:18073105, PubMed:19004003). Binds DNA as a dimer and an octamer (PubMed:18073105, PubMed:19004003). The octamer formed with lysine is stable in solution, but the octamer formed with arginine is unstable without DNA (PubMed:19004003). When crystallized in the absence of DNA, dimers are assembled into helical cylinders with six dimers per turn (PubMed:14976242). In solution, predominantly behaves as a dimer (PubMed:14976242).</text>
</comment>
<comment type="interaction">
    <interactant intactId="EBI-15665270">
        <id>O59188</id>
    </interactant>
    <interactant intactId="EBI-15665270">
        <id>O59188</id>
        <label>fl11</label>
    </interactant>
    <organismsDiffer>false</organismsDiffer>
    <experiments>5</experiments>
</comment>
<comment type="interaction">
    <interactant intactId="EBI-15665270">
        <id>O59188</id>
    </interactant>
    <interactant intactId="EBI-15665259">
        <id>O73983</id>
        <label>PHS023</label>
    </interactant>
    <organismsDiffer>false</organismsDiffer>
    <experiments>2</experiments>
</comment>
<accession>O59188</accession>
<reference key="1">
    <citation type="journal article" date="1998" name="DNA Res.">
        <title>Complete sequence and gene organization of the genome of a hyper-thermophilic archaebacterium, Pyrococcus horikoshii OT3.</title>
        <authorList>
            <person name="Kawarabayasi Y."/>
            <person name="Sawada M."/>
            <person name="Horikawa H."/>
            <person name="Haikawa Y."/>
            <person name="Hino Y."/>
            <person name="Yamamoto S."/>
            <person name="Sekine M."/>
            <person name="Baba S."/>
            <person name="Kosugi H."/>
            <person name="Hosoyama A."/>
            <person name="Nagai Y."/>
            <person name="Sakai M."/>
            <person name="Ogura K."/>
            <person name="Otsuka R."/>
            <person name="Nakazawa H."/>
            <person name="Takamiya M."/>
            <person name="Ohfuku Y."/>
            <person name="Funahashi T."/>
            <person name="Tanaka T."/>
            <person name="Kudoh Y."/>
            <person name="Yamazaki J."/>
            <person name="Kushida N."/>
            <person name="Oguchi A."/>
            <person name="Aoki K."/>
            <person name="Yoshizawa T."/>
            <person name="Nakamura Y."/>
            <person name="Robb F.T."/>
            <person name="Horikoshi K."/>
            <person name="Masuchi Y."/>
            <person name="Shizuya H."/>
            <person name="Kikuchi H."/>
        </authorList>
    </citation>
    <scope>NUCLEOTIDE SEQUENCE [LARGE SCALE GENOMIC DNA]</scope>
    <source>
        <strain>ATCC 700860 / DSM 12428 / JCM 9974 / NBRC 100139 / OT-3</strain>
    </source>
</reference>
<reference evidence="7" key="2">
    <citation type="journal article" date="2004" name="Proc. Natl. Acad. Sci. U.S.A.">
        <title>The archaeal feast/famine regulatory protein: potential roles of its assembly forms for regulating transcription.</title>
        <authorList>
            <person name="Koike H."/>
            <person name="Ishijima S.A."/>
            <person name="Clowney L."/>
            <person name="Suzuki M."/>
        </authorList>
    </citation>
    <scope>X-RAY CRYSTALLOGRAPHY (2.70 ANGSTROMS)</scope>
    <scope>FUNCTION</scope>
    <scope>DNA-BINDING</scope>
    <scope>SUBUNIT</scope>
    <source>
        <strain>ATCC 700860 / DSM 12428 / JCM 9974 / NBRC 100139 / OT-3</strain>
    </source>
</reference>
<reference evidence="8" key="3">
    <citation type="submission" date="2005-07" db="PDB data bank">
        <title>Crystal structure of PH1519 from Pyrococcus horikosii OT3.</title>
        <authorList>
            <person name="Okazaki N."/>
            <person name="Nakano N."/>
            <person name="Shinkai A."/>
            <person name="Yokoyama S."/>
        </authorList>
    </citation>
    <scope>X-RAY CRYSTALLOGRAPHY (1.80 ANGSTROMS) IN COMPLEX WITH L-GLUTAMINE</scope>
    <source>
        <strain>ATCC 700860 / DSM 12428 / JCM 9974 / NBRC 100139 / OT-3</strain>
    </source>
</reference>
<reference evidence="9" key="4">
    <citation type="journal article" date="2007" name="Structure">
        <title>Feast/famine regulation by transcription factor FL11 for the survival of the hyperthermophilic archaeon Pyrococcus OT3.</title>
        <authorList>
            <person name="Yokoyama K."/>
            <person name="Ishijima S.A."/>
            <person name="Koike H."/>
            <person name="Kurihara C."/>
            <person name="Shimowasa A."/>
            <person name="Kabasawa M."/>
            <person name="Kawashima T."/>
            <person name="Suzuki M."/>
        </authorList>
    </citation>
    <scope>X-RAY CRYSTALLOGRAPHY (2.10 ANGSTROMS) IN COMPLEX WITH DNA</scope>
    <scope>FUNCTION</scope>
    <scope>ACTIVITY REGULATION</scope>
    <scope>SUBUNIT</scope>
    <source>
        <strain>ATCC 700860 / DSM 12428 / JCM 9974 / NBRC 100139 / OT-3</strain>
    </source>
</reference>
<reference evidence="10 11" key="5">
    <citation type="journal article" date="2009" name="Proteins">
        <title>Interactions between the archaeal transcription repressor FL11 and its coregulators lysine and arginine.</title>
        <authorList>
            <person name="Yamada M."/>
            <person name="Ishijima S.A."/>
            <person name="Suzuki M."/>
        </authorList>
    </citation>
    <scope>X-RAY CRYSTALLOGRAPHY (2.39 ANGSTROMS) OF THE HOMOOCTAMER IN COMPLEXES WITH L-ARGININE AND L-LYSINE</scope>
    <scope>ACTIVITY REGULATION</scope>
    <scope>SUBUNIT</scope>
</reference>